<protein>
    <recommendedName>
        <fullName>DNA-directed RNA polymerases I, II, and III subunit rpabc4</fullName>
        <shortName>RNA polymerases I, II, and III subunit ABC4</shortName>
    </recommendedName>
    <alternativeName>
        <fullName>DNA-directed RNA polymerase II subunit K</fullName>
    </alternativeName>
</protein>
<reference key="1">
    <citation type="journal article" date="2005" name="Nature">
        <title>The genome of the social amoeba Dictyostelium discoideum.</title>
        <authorList>
            <person name="Eichinger L."/>
            <person name="Pachebat J.A."/>
            <person name="Gloeckner G."/>
            <person name="Rajandream M.A."/>
            <person name="Sucgang R."/>
            <person name="Berriman M."/>
            <person name="Song J."/>
            <person name="Olsen R."/>
            <person name="Szafranski K."/>
            <person name="Xu Q."/>
            <person name="Tunggal B."/>
            <person name="Kummerfeld S."/>
            <person name="Madera M."/>
            <person name="Konfortov B.A."/>
            <person name="Rivero F."/>
            <person name="Bankier A.T."/>
            <person name="Lehmann R."/>
            <person name="Hamlin N."/>
            <person name="Davies R."/>
            <person name="Gaudet P."/>
            <person name="Fey P."/>
            <person name="Pilcher K."/>
            <person name="Chen G."/>
            <person name="Saunders D."/>
            <person name="Sodergren E.J."/>
            <person name="Davis P."/>
            <person name="Kerhornou A."/>
            <person name="Nie X."/>
            <person name="Hall N."/>
            <person name="Anjard C."/>
            <person name="Hemphill L."/>
            <person name="Bason N."/>
            <person name="Farbrother P."/>
            <person name="Desany B."/>
            <person name="Just E."/>
            <person name="Morio T."/>
            <person name="Rost R."/>
            <person name="Churcher C.M."/>
            <person name="Cooper J."/>
            <person name="Haydock S."/>
            <person name="van Driessche N."/>
            <person name="Cronin A."/>
            <person name="Goodhead I."/>
            <person name="Muzny D.M."/>
            <person name="Mourier T."/>
            <person name="Pain A."/>
            <person name="Lu M."/>
            <person name="Harper D."/>
            <person name="Lindsay R."/>
            <person name="Hauser H."/>
            <person name="James K.D."/>
            <person name="Quiles M."/>
            <person name="Madan Babu M."/>
            <person name="Saito T."/>
            <person name="Buchrieser C."/>
            <person name="Wardroper A."/>
            <person name="Felder M."/>
            <person name="Thangavelu M."/>
            <person name="Johnson D."/>
            <person name="Knights A."/>
            <person name="Loulseged H."/>
            <person name="Mungall K.L."/>
            <person name="Oliver K."/>
            <person name="Price C."/>
            <person name="Quail M.A."/>
            <person name="Urushihara H."/>
            <person name="Hernandez J."/>
            <person name="Rabbinowitsch E."/>
            <person name="Steffen D."/>
            <person name="Sanders M."/>
            <person name="Ma J."/>
            <person name="Kohara Y."/>
            <person name="Sharp S."/>
            <person name="Simmonds M.N."/>
            <person name="Spiegler S."/>
            <person name="Tivey A."/>
            <person name="Sugano S."/>
            <person name="White B."/>
            <person name="Walker D."/>
            <person name="Woodward J.R."/>
            <person name="Winckler T."/>
            <person name="Tanaka Y."/>
            <person name="Shaulsky G."/>
            <person name="Schleicher M."/>
            <person name="Weinstock G.M."/>
            <person name="Rosenthal A."/>
            <person name="Cox E.C."/>
            <person name="Chisholm R.L."/>
            <person name="Gibbs R.A."/>
            <person name="Loomis W.F."/>
            <person name="Platzer M."/>
            <person name="Kay R.R."/>
            <person name="Williams J.G."/>
            <person name="Dear P.H."/>
            <person name="Noegel A.A."/>
            <person name="Barrell B.G."/>
            <person name="Kuspa A."/>
        </authorList>
    </citation>
    <scope>NUCLEOTIDE SEQUENCE [LARGE SCALE GENOMIC DNA]</scope>
    <source>
        <strain>AX4</strain>
    </source>
</reference>
<evidence type="ECO:0000250" key="1"/>
<evidence type="ECO:0000255" key="2"/>
<evidence type="ECO:0000305" key="3"/>
<name>RPAB4_DICDI</name>
<keyword id="KW-0240">DNA-directed RNA polymerase</keyword>
<keyword id="KW-0479">Metal-binding</keyword>
<keyword id="KW-0539">Nucleus</keyword>
<keyword id="KW-1185">Reference proteome</keyword>
<keyword id="KW-0804">Transcription</keyword>
<keyword id="KW-0862">Zinc</keyword>
<keyword id="KW-0863">Zinc-finger</keyword>
<accession>Q54R66</accession>
<proteinExistence type="inferred from homology"/>
<dbReference type="EMBL" id="AAFI02000054">
    <property type="protein sequence ID" value="EAL65759.1"/>
    <property type="molecule type" value="Genomic_DNA"/>
</dbReference>
<dbReference type="RefSeq" id="XP_639117.1">
    <property type="nucleotide sequence ID" value="XM_634025.1"/>
</dbReference>
<dbReference type="SMR" id="Q54R66"/>
<dbReference type="FunCoup" id="Q54R66">
    <property type="interactions" value="300"/>
</dbReference>
<dbReference type="STRING" id="44689.Q54R66"/>
<dbReference type="PaxDb" id="44689-DDB0216300"/>
<dbReference type="EnsemblProtists" id="EAL65759">
    <property type="protein sequence ID" value="EAL65759"/>
    <property type="gene ID" value="DDB_G0283365"/>
</dbReference>
<dbReference type="GeneID" id="8624050"/>
<dbReference type="KEGG" id="ddi:DDB_G0283365"/>
<dbReference type="dictyBase" id="DDB_G0283365">
    <property type="gene designation" value="rpb12"/>
</dbReference>
<dbReference type="VEuPathDB" id="AmoebaDB:DDB_G0283365"/>
<dbReference type="eggNOG" id="KOG3507">
    <property type="taxonomic scope" value="Eukaryota"/>
</dbReference>
<dbReference type="HOGENOM" id="CLU_179456_1_1_1"/>
<dbReference type="InParanoid" id="Q54R66"/>
<dbReference type="PhylomeDB" id="Q54R66"/>
<dbReference type="Reactome" id="R-DDI-113418">
    <property type="pathway name" value="Formation of the Early Elongation Complex"/>
</dbReference>
<dbReference type="Reactome" id="R-DDI-674695">
    <property type="pathway name" value="RNA Polymerase II Pre-transcription Events"/>
</dbReference>
<dbReference type="Reactome" id="R-DDI-6781823">
    <property type="pathway name" value="Formation of TC-NER Pre-Incision Complex"/>
</dbReference>
<dbReference type="Reactome" id="R-DDI-6782135">
    <property type="pathway name" value="Dual incision in TC-NER"/>
</dbReference>
<dbReference type="Reactome" id="R-DDI-6782210">
    <property type="pathway name" value="Gap-filling DNA repair synthesis and ligation in TC-NER"/>
</dbReference>
<dbReference type="Reactome" id="R-DDI-6796648">
    <property type="pathway name" value="TP53 Regulates Transcription of DNA Repair Genes"/>
</dbReference>
<dbReference type="Reactome" id="R-DDI-6807505">
    <property type="pathway name" value="RNA polymerase II transcribes snRNA genes"/>
</dbReference>
<dbReference type="Reactome" id="R-DDI-72086">
    <property type="pathway name" value="mRNA Capping"/>
</dbReference>
<dbReference type="Reactome" id="R-DDI-72163">
    <property type="pathway name" value="mRNA Splicing - Major Pathway"/>
</dbReference>
<dbReference type="Reactome" id="R-DDI-72203">
    <property type="pathway name" value="Processing of Capped Intron-Containing Pre-mRNA"/>
</dbReference>
<dbReference type="Reactome" id="R-DDI-73762">
    <property type="pathway name" value="RNA Polymerase I Transcription Initiation"/>
</dbReference>
<dbReference type="Reactome" id="R-DDI-73772">
    <property type="pathway name" value="RNA Polymerase I Promoter Escape"/>
</dbReference>
<dbReference type="Reactome" id="R-DDI-73776">
    <property type="pathway name" value="RNA Polymerase II Promoter Escape"/>
</dbReference>
<dbReference type="Reactome" id="R-DDI-73779">
    <property type="pathway name" value="RNA Polymerase II Transcription Pre-Initiation And Promoter Opening"/>
</dbReference>
<dbReference type="Reactome" id="R-DDI-75953">
    <property type="pathway name" value="RNA Polymerase II Transcription Initiation"/>
</dbReference>
<dbReference type="Reactome" id="R-DDI-76042">
    <property type="pathway name" value="RNA Polymerase II Transcription Initiation And Promoter Clearance"/>
</dbReference>
<dbReference type="Reactome" id="R-DDI-76061">
    <property type="pathway name" value="RNA Polymerase III Transcription Initiation From Type 1 Promoter"/>
</dbReference>
<dbReference type="Reactome" id="R-DDI-76066">
    <property type="pathway name" value="RNA Polymerase III Transcription Initiation From Type 2 Promoter"/>
</dbReference>
<dbReference type="Reactome" id="R-DDI-77075">
    <property type="pathway name" value="RNA Pol II CTD phosphorylation and interaction with CE"/>
</dbReference>
<dbReference type="Reactome" id="R-DDI-9018519">
    <property type="pathway name" value="Estrogen-dependent gene expression"/>
</dbReference>
<dbReference type="PRO" id="PR:Q54R66"/>
<dbReference type="Proteomes" id="UP000002195">
    <property type="component" value="Chromosome 4"/>
</dbReference>
<dbReference type="GO" id="GO:0005736">
    <property type="term" value="C:RNA polymerase I complex"/>
    <property type="evidence" value="ECO:0000250"/>
    <property type="project" value="dictyBase"/>
</dbReference>
<dbReference type="GO" id="GO:0005665">
    <property type="term" value="C:RNA polymerase II, core complex"/>
    <property type="evidence" value="ECO:0000250"/>
    <property type="project" value="dictyBase"/>
</dbReference>
<dbReference type="GO" id="GO:0005666">
    <property type="term" value="C:RNA polymerase III complex"/>
    <property type="evidence" value="ECO:0000250"/>
    <property type="project" value="dictyBase"/>
</dbReference>
<dbReference type="GO" id="GO:0003677">
    <property type="term" value="F:DNA binding"/>
    <property type="evidence" value="ECO:0007669"/>
    <property type="project" value="InterPro"/>
</dbReference>
<dbReference type="GO" id="GO:0003899">
    <property type="term" value="F:DNA-directed RNA polymerase activity"/>
    <property type="evidence" value="ECO:0000250"/>
    <property type="project" value="dictyBase"/>
</dbReference>
<dbReference type="GO" id="GO:0008270">
    <property type="term" value="F:zinc ion binding"/>
    <property type="evidence" value="ECO:0007669"/>
    <property type="project" value="UniProtKB-KW"/>
</dbReference>
<dbReference type="GO" id="GO:0006360">
    <property type="term" value="P:transcription by RNA polymerase I"/>
    <property type="evidence" value="ECO:0000250"/>
    <property type="project" value="dictyBase"/>
</dbReference>
<dbReference type="GO" id="GO:0006366">
    <property type="term" value="P:transcription by RNA polymerase II"/>
    <property type="evidence" value="ECO:0000250"/>
    <property type="project" value="dictyBase"/>
</dbReference>
<dbReference type="GO" id="GO:0006383">
    <property type="term" value="P:transcription by RNA polymerase III"/>
    <property type="evidence" value="ECO:0000250"/>
    <property type="project" value="dictyBase"/>
</dbReference>
<dbReference type="FunFam" id="2.20.28.30:FF:000002">
    <property type="entry name" value="DNA-directed RNA polymerases II, IV and V subunit 12"/>
    <property type="match status" value="1"/>
</dbReference>
<dbReference type="Gene3D" id="2.20.28.30">
    <property type="entry name" value="RNA polymerase ii, chain L"/>
    <property type="match status" value="1"/>
</dbReference>
<dbReference type="InterPro" id="IPR006591">
    <property type="entry name" value="RNAP_P/RPABC4"/>
</dbReference>
<dbReference type="InterPro" id="IPR039747">
    <property type="entry name" value="RPABC4"/>
</dbReference>
<dbReference type="InterPro" id="IPR029040">
    <property type="entry name" value="RPABC4/Spt4"/>
</dbReference>
<dbReference type="PANTHER" id="PTHR12056">
    <property type="entry name" value="DNA-DIRECTED RNA POLYMERASES I, II, AND III"/>
    <property type="match status" value="1"/>
</dbReference>
<dbReference type="PANTHER" id="PTHR12056:SF2">
    <property type="entry name" value="GEO11084P1"/>
    <property type="match status" value="1"/>
</dbReference>
<dbReference type="Pfam" id="PF03604">
    <property type="entry name" value="Zn_ribbon_RPAB4"/>
    <property type="match status" value="1"/>
</dbReference>
<dbReference type="SMART" id="SM00659">
    <property type="entry name" value="RPOLCX"/>
    <property type="match status" value="1"/>
</dbReference>
<dbReference type="SUPFAM" id="SSF63393">
    <property type="entry name" value="RNA polymerase subunits"/>
    <property type="match status" value="1"/>
</dbReference>
<organism>
    <name type="scientific">Dictyostelium discoideum</name>
    <name type="common">Social amoeba</name>
    <dbReference type="NCBI Taxonomy" id="44689"/>
    <lineage>
        <taxon>Eukaryota</taxon>
        <taxon>Amoebozoa</taxon>
        <taxon>Evosea</taxon>
        <taxon>Eumycetozoa</taxon>
        <taxon>Dictyostelia</taxon>
        <taxon>Dictyosteliales</taxon>
        <taxon>Dictyosteliaceae</taxon>
        <taxon>Dictyostelium</taxon>
    </lineage>
</organism>
<gene>
    <name type="primary">polr2k</name>
    <name type="synonym">rpb12</name>
    <name type="ORF">DDB_G0283365</name>
</gene>
<sequence>MPCLYICGECGAEHEIKPKEPVKCKDCTHRIMYKKRTDKMIQFEAR</sequence>
<feature type="chain" id="PRO_0000330828" description="DNA-directed RNA polymerases I, II, and III subunit rpabc4">
    <location>
        <begin position="1"/>
        <end position="46"/>
    </location>
</feature>
<feature type="zinc finger region" description="C4-type" evidence="2">
    <location>
        <begin position="7"/>
        <end position="27"/>
    </location>
</feature>
<feature type="binding site" evidence="1">
    <location>
        <position position="7"/>
    </location>
    <ligand>
        <name>Zn(2+)</name>
        <dbReference type="ChEBI" id="CHEBI:29105"/>
    </ligand>
</feature>
<feature type="binding site" evidence="1">
    <location>
        <position position="10"/>
    </location>
    <ligand>
        <name>Zn(2+)</name>
        <dbReference type="ChEBI" id="CHEBI:29105"/>
    </ligand>
</feature>
<feature type="binding site" evidence="1">
    <location>
        <position position="24"/>
    </location>
    <ligand>
        <name>Zn(2+)</name>
        <dbReference type="ChEBI" id="CHEBI:29105"/>
    </ligand>
</feature>
<feature type="binding site" evidence="1">
    <location>
        <position position="27"/>
    </location>
    <ligand>
        <name>Zn(2+)</name>
        <dbReference type="ChEBI" id="CHEBI:29105"/>
    </ligand>
</feature>
<comment type="function">
    <text evidence="1">DNA-dependent RNA polymerase catalyzes the transcription of DNA into RNA using the four ribonucleoside triphosphates as substrates. Common component of RNA polymerases I, II and III which synthesize ribosomal RNA precursors, mRNA precursors and many functional non-coding RNAs, and a small RNAs, such as 5S rRNA and tRNAs, respectively (By similarity).</text>
</comment>
<comment type="subunit">
    <text evidence="1">Component of the RNA polymerase I (Pol I), RNA polymerase II (Pol II) and RNA polymerase III (Pol III) complexes consisting of at least 13, 12 and 17 subunits, respectively.</text>
</comment>
<comment type="subcellular location">
    <subcellularLocation>
        <location evidence="1">Nucleus</location>
    </subcellularLocation>
</comment>
<comment type="similarity">
    <text evidence="3">Belongs to the archaeal Rpo12/eukaryotic RPC10 RNA polymerase subunit family.</text>
</comment>